<protein>
    <recommendedName>
        <fullName>Zinc finger protein 787</fullName>
    </recommendedName>
</protein>
<proteinExistence type="evidence at transcript level"/>
<organism>
    <name type="scientific">Mus musculus</name>
    <name type="common">Mouse</name>
    <dbReference type="NCBI Taxonomy" id="10090"/>
    <lineage>
        <taxon>Eukaryota</taxon>
        <taxon>Metazoa</taxon>
        <taxon>Chordata</taxon>
        <taxon>Craniata</taxon>
        <taxon>Vertebrata</taxon>
        <taxon>Euteleostomi</taxon>
        <taxon>Mammalia</taxon>
        <taxon>Eutheria</taxon>
        <taxon>Euarchontoglires</taxon>
        <taxon>Glires</taxon>
        <taxon>Rodentia</taxon>
        <taxon>Myomorpha</taxon>
        <taxon>Muroidea</taxon>
        <taxon>Muridae</taxon>
        <taxon>Murinae</taxon>
        <taxon>Mus</taxon>
        <taxon>Mus</taxon>
    </lineage>
</organism>
<accession>Q8BIF9</accession>
<accession>B9EHE2</accession>
<comment type="function">
    <text>May be involved in transcriptional regulation.</text>
</comment>
<comment type="subcellular location">
    <subcellularLocation>
        <location evidence="4">Nucleus</location>
    </subcellularLocation>
</comment>
<comment type="similarity">
    <text evidence="4">Belongs to the krueppel C2H2-type zinc-finger protein family.</text>
</comment>
<comment type="sequence caution" evidence="4">
    <conflict type="frameshift">
        <sequence resource="EMBL-CDS" id="BAC36810"/>
    </conflict>
</comment>
<keyword id="KW-0238">DNA-binding</keyword>
<keyword id="KW-1017">Isopeptide bond</keyword>
<keyword id="KW-0479">Metal-binding</keyword>
<keyword id="KW-0539">Nucleus</keyword>
<keyword id="KW-0597">Phosphoprotein</keyword>
<keyword id="KW-1185">Reference proteome</keyword>
<keyword id="KW-0677">Repeat</keyword>
<keyword id="KW-0804">Transcription</keyword>
<keyword id="KW-0805">Transcription regulation</keyword>
<keyword id="KW-0832">Ubl conjugation</keyword>
<keyword id="KW-0862">Zinc</keyword>
<keyword id="KW-0863">Zinc-finger</keyword>
<sequence length="381" mass="40477">MELREEAWSPGPLDSEDQQMASHENPVDILIMDDDDVPSWPPTKLSPPQSAPPPGPPPRPRPPAPYICTECGKSFSHWSKLTRHQRTHTGERPNACTDCGKTFSQSSHLVQHRRIHTGEKPYACSECGKRFSWSSNLMQHQRIHTGEKPYTCPDCGRSFTQSKSLAKHRRSHSGLKPFVCPRCGRGFSQPKSLARHLRLHPELSGPGVAAKVLAASVRRAKAPEEATAADGEIAIPVGDGEGIIVVGPPGDGAAAAAALAGVGTRATGTRSRRAPAPKPYVCMECGKGFGHGAGLLAHQRAQHGDGLGVAVGEEPAHICVECGEGFVQGAALRRHKKIHAVGAPSVCSSCGQSFYRAGGEDDGEDQSAGARCAECRGGEAR</sequence>
<evidence type="ECO:0000250" key="1">
    <source>
        <dbReference type="UniProtKB" id="Q6DD87"/>
    </source>
</evidence>
<evidence type="ECO:0000255" key="2">
    <source>
        <dbReference type="PROSITE-ProRule" id="PRU00042"/>
    </source>
</evidence>
<evidence type="ECO:0000256" key="3">
    <source>
        <dbReference type="SAM" id="MobiDB-lite"/>
    </source>
</evidence>
<evidence type="ECO:0000305" key="4"/>
<feature type="chain" id="PRO_0000287607" description="Zinc finger protein 787">
    <location>
        <begin position="1"/>
        <end position="381"/>
    </location>
</feature>
<feature type="zinc finger region" description="C2H2-type 1" evidence="2">
    <location>
        <begin position="66"/>
        <end position="88"/>
    </location>
</feature>
<feature type="zinc finger region" description="C2H2-type 2" evidence="2">
    <location>
        <begin position="94"/>
        <end position="116"/>
    </location>
</feature>
<feature type="zinc finger region" description="C2H2-type 3" evidence="2">
    <location>
        <begin position="122"/>
        <end position="144"/>
    </location>
</feature>
<feature type="zinc finger region" description="C2H2-type 4" evidence="2">
    <location>
        <begin position="150"/>
        <end position="172"/>
    </location>
</feature>
<feature type="zinc finger region" description="C2H2-type 5" evidence="2">
    <location>
        <begin position="178"/>
        <end position="200"/>
    </location>
</feature>
<feature type="zinc finger region" description="C2H2-type 6" evidence="2">
    <location>
        <begin position="280"/>
        <end position="303"/>
    </location>
</feature>
<feature type="zinc finger region" description="C2H2-type 7" evidence="2">
    <location>
        <begin position="317"/>
        <end position="339"/>
    </location>
</feature>
<feature type="region of interest" description="Disordered" evidence="3">
    <location>
        <begin position="1"/>
        <end position="65"/>
    </location>
</feature>
<feature type="compositionally biased region" description="Pro residues" evidence="3">
    <location>
        <begin position="39"/>
        <end position="65"/>
    </location>
</feature>
<feature type="modified residue" description="Phosphothreonine" evidence="1">
    <location>
        <position position="117"/>
    </location>
</feature>
<feature type="modified residue" description="Phosphotyrosine" evidence="1">
    <location>
        <position position="122"/>
    </location>
</feature>
<feature type="modified residue" description="Phosphoserine" evidence="1">
    <location>
        <position position="132"/>
    </location>
</feature>
<feature type="cross-link" description="Glycyl lysine isopeptide (Lys-Gly) (interchain with G-Cter in SUMO2)" evidence="1">
    <location>
        <position position="191"/>
    </location>
</feature>
<feature type="cross-link" description="Glycyl lysine isopeptide (Lys-Gly) (interchain with G-Cter in SUMO2)" evidence="1">
    <location>
        <position position="211"/>
    </location>
</feature>
<feature type="sequence conflict" description="In Ref. 1; BAC36810." evidence="4" ref="1">
    <original>L</original>
    <variation>M</variation>
    <location>
        <position position="193"/>
    </location>
</feature>
<gene>
    <name type="primary">Znf787</name>
    <name type="synonym">Zfp787</name>
</gene>
<reference key="1">
    <citation type="journal article" date="2005" name="Science">
        <title>The transcriptional landscape of the mammalian genome.</title>
        <authorList>
            <person name="Carninci P."/>
            <person name="Kasukawa T."/>
            <person name="Katayama S."/>
            <person name="Gough J."/>
            <person name="Frith M.C."/>
            <person name="Maeda N."/>
            <person name="Oyama R."/>
            <person name="Ravasi T."/>
            <person name="Lenhard B."/>
            <person name="Wells C."/>
            <person name="Kodzius R."/>
            <person name="Shimokawa K."/>
            <person name="Bajic V.B."/>
            <person name="Brenner S.E."/>
            <person name="Batalov S."/>
            <person name="Forrest A.R."/>
            <person name="Zavolan M."/>
            <person name="Davis M.J."/>
            <person name="Wilming L.G."/>
            <person name="Aidinis V."/>
            <person name="Allen J.E."/>
            <person name="Ambesi-Impiombato A."/>
            <person name="Apweiler R."/>
            <person name="Aturaliya R.N."/>
            <person name="Bailey T.L."/>
            <person name="Bansal M."/>
            <person name="Baxter L."/>
            <person name="Beisel K.W."/>
            <person name="Bersano T."/>
            <person name="Bono H."/>
            <person name="Chalk A.M."/>
            <person name="Chiu K.P."/>
            <person name="Choudhary V."/>
            <person name="Christoffels A."/>
            <person name="Clutterbuck D.R."/>
            <person name="Crowe M.L."/>
            <person name="Dalla E."/>
            <person name="Dalrymple B.P."/>
            <person name="de Bono B."/>
            <person name="Della Gatta G."/>
            <person name="di Bernardo D."/>
            <person name="Down T."/>
            <person name="Engstrom P."/>
            <person name="Fagiolini M."/>
            <person name="Faulkner G."/>
            <person name="Fletcher C.F."/>
            <person name="Fukushima T."/>
            <person name="Furuno M."/>
            <person name="Futaki S."/>
            <person name="Gariboldi M."/>
            <person name="Georgii-Hemming P."/>
            <person name="Gingeras T.R."/>
            <person name="Gojobori T."/>
            <person name="Green R.E."/>
            <person name="Gustincich S."/>
            <person name="Harbers M."/>
            <person name="Hayashi Y."/>
            <person name="Hensch T.K."/>
            <person name="Hirokawa N."/>
            <person name="Hill D."/>
            <person name="Huminiecki L."/>
            <person name="Iacono M."/>
            <person name="Ikeo K."/>
            <person name="Iwama A."/>
            <person name="Ishikawa T."/>
            <person name="Jakt M."/>
            <person name="Kanapin A."/>
            <person name="Katoh M."/>
            <person name="Kawasawa Y."/>
            <person name="Kelso J."/>
            <person name="Kitamura H."/>
            <person name="Kitano H."/>
            <person name="Kollias G."/>
            <person name="Krishnan S.P."/>
            <person name="Kruger A."/>
            <person name="Kummerfeld S.K."/>
            <person name="Kurochkin I.V."/>
            <person name="Lareau L.F."/>
            <person name="Lazarevic D."/>
            <person name="Lipovich L."/>
            <person name="Liu J."/>
            <person name="Liuni S."/>
            <person name="McWilliam S."/>
            <person name="Madan Babu M."/>
            <person name="Madera M."/>
            <person name="Marchionni L."/>
            <person name="Matsuda H."/>
            <person name="Matsuzawa S."/>
            <person name="Miki H."/>
            <person name="Mignone F."/>
            <person name="Miyake S."/>
            <person name="Morris K."/>
            <person name="Mottagui-Tabar S."/>
            <person name="Mulder N."/>
            <person name="Nakano N."/>
            <person name="Nakauchi H."/>
            <person name="Ng P."/>
            <person name="Nilsson R."/>
            <person name="Nishiguchi S."/>
            <person name="Nishikawa S."/>
            <person name="Nori F."/>
            <person name="Ohara O."/>
            <person name="Okazaki Y."/>
            <person name="Orlando V."/>
            <person name="Pang K.C."/>
            <person name="Pavan W.J."/>
            <person name="Pavesi G."/>
            <person name="Pesole G."/>
            <person name="Petrovsky N."/>
            <person name="Piazza S."/>
            <person name="Reed J."/>
            <person name="Reid J.F."/>
            <person name="Ring B.Z."/>
            <person name="Ringwald M."/>
            <person name="Rost B."/>
            <person name="Ruan Y."/>
            <person name="Salzberg S.L."/>
            <person name="Sandelin A."/>
            <person name="Schneider C."/>
            <person name="Schoenbach C."/>
            <person name="Sekiguchi K."/>
            <person name="Semple C.A."/>
            <person name="Seno S."/>
            <person name="Sessa L."/>
            <person name="Sheng Y."/>
            <person name="Shibata Y."/>
            <person name="Shimada H."/>
            <person name="Shimada K."/>
            <person name="Silva D."/>
            <person name="Sinclair B."/>
            <person name="Sperling S."/>
            <person name="Stupka E."/>
            <person name="Sugiura K."/>
            <person name="Sultana R."/>
            <person name="Takenaka Y."/>
            <person name="Taki K."/>
            <person name="Tammoja K."/>
            <person name="Tan S.L."/>
            <person name="Tang S."/>
            <person name="Taylor M.S."/>
            <person name="Tegner J."/>
            <person name="Teichmann S.A."/>
            <person name="Ueda H.R."/>
            <person name="van Nimwegen E."/>
            <person name="Verardo R."/>
            <person name="Wei C.L."/>
            <person name="Yagi K."/>
            <person name="Yamanishi H."/>
            <person name="Zabarovsky E."/>
            <person name="Zhu S."/>
            <person name="Zimmer A."/>
            <person name="Hide W."/>
            <person name="Bult C."/>
            <person name="Grimmond S.M."/>
            <person name="Teasdale R.D."/>
            <person name="Liu E.T."/>
            <person name="Brusic V."/>
            <person name="Quackenbush J."/>
            <person name="Wahlestedt C."/>
            <person name="Mattick J.S."/>
            <person name="Hume D.A."/>
            <person name="Kai C."/>
            <person name="Sasaki D."/>
            <person name="Tomaru Y."/>
            <person name="Fukuda S."/>
            <person name="Kanamori-Katayama M."/>
            <person name="Suzuki M."/>
            <person name="Aoki J."/>
            <person name="Arakawa T."/>
            <person name="Iida J."/>
            <person name="Imamura K."/>
            <person name="Itoh M."/>
            <person name="Kato T."/>
            <person name="Kawaji H."/>
            <person name="Kawagashira N."/>
            <person name="Kawashima T."/>
            <person name="Kojima M."/>
            <person name="Kondo S."/>
            <person name="Konno H."/>
            <person name="Nakano K."/>
            <person name="Ninomiya N."/>
            <person name="Nishio T."/>
            <person name="Okada M."/>
            <person name="Plessy C."/>
            <person name="Shibata K."/>
            <person name="Shiraki T."/>
            <person name="Suzuki S."/>
            <person name="Tagami M."/>
            <person name="Waki K."/>
            <person name="Watahiki A."/>
            <person name="Okamura-Oho Y."/>
            <person name="Suzuki H."/>
            <person name="Kawai J."/>
            <person name="Hayashizaki Y."/>
        </authorList>
    </citation>
    <scope>NUCLEOTIDE SEQUENCE [LARGE SCALE MRNA]</scope>
    <source>
        <strain>C57BL/6J</strain>
    </source>
</reference>
<reference key="2">
    <citation type="submission" date="2005-07" db="EMBL/GenBank/DDBJ databases">
        <authorList>
            <person name="Mural R.J."/>
            <person name="Adams M.D."/>
            <person name="Myers E.W."/>
            <person name="Smith H.O."/>
            <person name="Venter J.C."/>
        </authorList>
    </citation>
    <scope>NUCLEOTIDE SEQUENCE [LARGE SCALE GENOMIC DNA]</scope>
</reference>
<reference key="3">
    <citation type="journal article" date="2004" name="Genome Res.">
        <title>The status, quality, and expansion of the NIH full-length cDNA project: the Mammalian Gene Collection (MGC).</title>
        <authorList>
            <consortium name="The MGC Project Team"/>
        </authorList>
    </citation>
    <scope>NUCLEOTIDE SEQUENCE [LARGE SCALE MRNA]</scope>
    <source>
        <tissue>Brain</tissue>
    </source>
</reference>
<name>ZN787_MOUSE</name>
<dbReference type="EMBL" id="AK077458">
    <property type="protein sequence ID" value="BAC36810.1"/>
    <property type="status" value="ALT_FRAME"/>
    <property type="molecule type" value="mRNA"/>
</dbReference>
<dbReference type="EMBL" id="CH466627">
    <property type="protein sequence ID" value="EDL31307.1"/>
    <property type="molecule type" value="Genomic_DNA"/>
</dbReference>
<dbReference type="EMBL" id="BC137753">
    <property type="protein sequence ID" value="AAI37754.1"/>
    <property type="molecule type" value="mRNA"/>
</dbReference>
<dbReference type="CCDS" id="CCDS20769.1"/>
<dbReference type="RefSeq" id="NP_001013030.1">
    <property type="nucleotide sequence ID" value="NM_001013012.1"/>
</dbReference>
<dbReference type="RefSeq" id="XP_006540376.1">
    <property type="nucleotide sequence ID" value="XM_006540313.3"/>
</dbReference>
<dbReference type="SMR" id="Q8BIF9"/>
<dbReference type="BioGRID" id="211946">
    <property type="interactions" value="27"/>
</dbReference>
<dbReference type="FunCoup" id="Q8BIF9">
    <property type="interactions" value="577"/>
</dbReference>
<dbReference type="IntAct" id="Q8BIF9">
    <property type="interactions" value="1"/>
</dbReference>
<dbReference type="STRING" id="10090.ENSMUSP00000092468"/>
<dbReference type="iPTMnet" id="Q8BIF9"/>
<dbReference type="PhosphoSitePlus" id="Q8BIF9"/>
<dbReference type="SwissPalm" id="Q8BIF9"/>
<dbReference type="PaxDb" id="10090-ENSMUSP00000092468"/>
<dbReference type="PeptideAtlas" id="Q8BIF9"/>
<dbReference type="ProteomicsDB" id="299602"/>
<dbReference type="Pumba" id="Q8BIF9"/>
<dbReference type="Antibodypedia" id="33179">
    <property type="antibodies" value="88 antibodies from 16 providers"/>
</dbReference>
<dbReference type="DNASU" id="67109"/>
<dbReference type="Ensembl" id="ENSMUST00000094870.3">
    <property type="protein sequence ID" value="ENSMUSP00000092468.2"/>
    <property type="gene ID" value="ENSMUSG00000046792.9"/>
</dbReference>
<dbReference type="GeneID" id="67109"/>
<dbReference type="KEGG" id="mmu:67109"/>
<dbReference type="UCSC" id="uc009fap.1">
    <property type="organism name" value="mouse"/>
</dbReference>
<dbReference type="AGR" id="MGI:1914359"/>
<dbReference type="CTD" id="67109"/>
<dbReference type="MGI" id="MGI:1914359">
    <property type="gene designation" value="Zfp787"/>
</dbReference>
<dbReference type="VEuPathDB" id="HostDB:ENSMUSG00000046792"/>
<dbReference type="eggNOG" id="KOG1721">
    <property type="taxonomic scope" value="Eukaryota"/>
</dbReference>
<dbReference type="GeneTree" id="ENSGT00940000163064"/>
<dbReference type="HOGENOM" id="CLU_002678_19_0_1"/>
<dbReference type="InParanoid" id="Q8BIF9"/>
<dbReference type="OMA" id="PKPYVCM"/>
<dbReference type="OrthoDB" id="9439903at2759"/>
<dbReference type="PhylomeDB" id="Q8BIF9"/>
<dbReference type="TreeFam" id="TF337689"/>
<dbReference type="BioGRID-ORCS" id="67109">
    <property type="hits" value="7 hits in 77 CRISPR screens"/>
</dbReference>
<dbReference type="ChiTaRS" id="Zfp787">
    <property type="organism name" value="mouse"/>
</dbReference>
<dbReference type="PRO" id="PR:Q8BIF9"/>
<dbReference type="Proteomes" id="UP000000589">
    <property type="component" value="Chromosome 7"/>
</dbReference>
<dbReference type="RNAct" id="Q8BIF9">
    <property type="molecule type" value="protein"/>
</dbReference>
<dbReference type="Bgee" id="ENSMUSG00000046792">
    <property type="expression patterns" value="Expressed in retinal neural layer and 253 other cell types or tissues"/>
</dbReference>
<dbReference type="ExpressionAtlas" id="Q8BIF9">
    <property type="expression patterns" value="baseline and differential"/>
</dbReference>
<dbReference type="GO" id="GO:0005634">
    <property type="term" value="C:nucleus"/>
    <property type="evidence" value="ECO:0007669"/>
    <property type="project" value="UniProtKB-SubCell"/>
</dbReference>
<dbReference type="GO" id="GO:1990837">
    <property type="term" value="F:sequence-specific double-stranded DNA binding"/>
    <property type="evidence" value="ECO:0007669"/>
    <property type="project" value="Ensembl"/>
</dbReference>
<dbReference type="GO" id="GO:0008270">
    <property type="term" value="F:zinc ion binding"/>
    <property type="evidence" value="ECO:0007669"/>
    <property type="project" value="UniProtKB-KW"/>
</dbReference>
<dbReference type="FunFam" id="3.30.160.60:FF:001497">
    <property type="entry name" value="Zinc finger protein 275"/>
    <property type="match status" value="1"/>
</dbReference>
<dbReference type="FunFam" id="3.30.160.60:FF:002090">
    <property type="entry name" value="Zinc finger protein 473"/>
    <property type="match status" value="1"/>
</dbReference>
<dbReference type="FunFam" id="3.30.160.60:FF:000180">
    <property type="entry name" value="Zinc finger protein 689"/>
    <property type="match status" value="1"/>
</dbReference>
<dbReference type="FunFam" id="3.30.160.60:FF:001954">
    <property type="entry name" value="Zinc finger protein 787"/>
    <property type="match status" value="1"/>
</dbReference>
<dbReference type="FunFam" id="3.30.160.60:FF:002431">
    <property type="entry name" value="Zinc finger protein 787"/>
    <property type="match status" value="1"/>
</dbReference>
<dbReference type="FunFam" id="3.30.160.60:FF:002586">
    <property type="entry name" value="Zinc finger protein 787"/>
    <property type="match status" value="1"/>
</dbReference>
<dbReference type="Gene3D" id="3.30.160.60">
    <property type="entry name" value="Classic Zinc Finger"/>
    <property type="match status" value="7"/>
</dbReference>
<dbReference type="InterPro" id="IPR036236">
    <property type="entry name" value="Znf_C2H2_sf"/>
</dbReference>
<dbReference type="InterPro" id="IPR013087">
    <property type="entry name" value="Znf_C2H2_type"/>
</dbReference>
<dbReference type="PANTHER" id="PTHR23226">
    <property type="entry name" value="ZINC FINGER AND SCAN DOMAIN-CONTAINING"/>
    <property type="match status" value="1"/>
</dbReference>
<dbReference type="PANTHER" id="PTHR23226:SF85">
    <property type="entry name" value="ZINC FINGER PROTEIN 397"/>
    <property type="match status" value="1"/>
</dbReference>
<dbReference type="Pfam" id="PF00096">
    <property type="entry name" value="zf-C2H2"/>
    <property type="match status" value="3"/>
</dbReference>
<dbReference type="Pfam" id="PF13912">
    <property type="entry name" value="zf-C2H2_6"/>
    <property type="match status" value="1"/>
</dbReference>
<dbReference type="Pfam" id="PF13465">
    <property type="entry name" value="zf-H2C2_2"/>
    <property type="match status" value="1"/>
</dbReference>
<dbReference type="SMART" id="SM00355">
    <property type="entry name" value="ZnF_C2H2"/>
    <property type="match status" value="7"/>
</dbReference>
<dbReference type="SUPFAM" id="SSF57667">
    <property type="entry name" value="beta-beta-alpha zinc fingers"/>
    <property type="match status" value="5"/>
</dbReference>
<dbReference type="PROSITE" id="PS00028">
    <property type="entry name" value="ZINC_FINGER_C2H2_1"/>
    <property type="match status" value="7"/>
</dbReference>
<dbReference type="PROSITE" id="PS50157">
    <property type="entry name" value="ZINC_FINGER_C2H2_2"/>
    <property type="match status" value="7"/>
</dbReference>